<proteinExistence type="inferred from homology"/>
<feature type="chain" id="PRO_1000018453" description="Indole-3-glycerol phosphate synthase">
    <location>
        <begin position="1"/>
        <end position="261"/>
    </location>
</feature>
<dbReference type="EC" id="4.1.1.48" evidence="1"/>
<dbReference type="EMBL" id="CP000440">
    <property type="protein sequence ID" value="ABI85995.1"/>
    <property type="molecule type" value="Genomic_DNA"/>
</dbReference>
<dbReference type="RefSeq" id="WP_011655870.1">
    <property type="nucleotide sequence ID" value="NC_008390.1"/>
</dbReference>
<dbReference type="SMR" id="Q0BIM8"/>
<dbReference type="GeneID" id="93084152"/>
<dbReference type="KEGG" id="bam:Bamb_0436"/>
<dbReference type="PATRIC" id="fig|339670.21.peg.1173"/>
<dbReference type="eggNOG" id="COG0134">
    <property type="taxonomic scope" value="Bacteria"/>
</dbReference>
<dbReference type="UniPathway" id="UPA00035">
    <property type="reaction ID" value="UER00043"/>
</dbReference>
<dbReference type="Proteomes" id="UP000000662">
    <property type="component" value="Chromosome 1"/>
</dbReference>
<dbReference type="GO" id="GO:0004425">
    <property type="term" value="F:indole-3-glycerol-phosphate synthase activity"/>
    <property type="evidence" value="ECO:0007669"/>
    <property type="project" value="UniProtKB-UniRule"/>
</dbReference>
<dbReference type="GO" id="GO:0004640">
    <property type="term" value="F:phosphoribosylanthranilate isomerase activity"/>
    <property type="evidence" value="ECO:0007669"/>
    <property type="project" value="TreeGrafter"/>
</dbReference>
<dbReference type="GO" id="GO:0000162">
    <property type="term" value="P:L-tryptophan biosynthetic process"/>
    <property type="evidence" value="ECO:0007669"/>
    <property type="project" value="UniProtKB-UniRule"/>
</dbReference>
<dbReference type="CDD" id="cd00331">
    <property type="entry name" value="IGPS"/>
    <property type="match status" value="1"/>
</dbReference>
<dbReference type="FunFam" id="3.20.20.70:FF:000024">
    <property type="entry name" value="Indole-3-glycerol phosphate synthase"/>
    <property type="match status" value="1"/>
</dbReference>
<dbReference type="Gene3D" id="3.20.20.70">
    <property type="entry name" value="Aldolase class I"/>
    <property type="match status" value="1"/>
</dbReference>
<dbReference type="HAMAP" id="MF_00134_B">
    <property type="entry name" value="IGPS_B"/>
    <property type="match status" value="1"/>
</dbReference>
<dbReference type="InterPro" id="IPR013785">
    <property type="entry name" value="Aldolase_TIM"/>
</dbReference>
<dbReference type="InterPro" id="IPR045186">
    <property type="entry name" value="Indole-3-glycerol_P_synth"/>
</dbReference>
<dbReference type="InterPro" id="IPR013798">
    <property type="entry name" value="Indole-3-glycerol_P_synth_dom"/>
</dbReference>
<dbReference type="InterPro" id="IPR001468">
    <property type="entry name" value="Indole-3-GlycerolPSynthase_CS"/>
</dbReference>
<dbReference type="InterPro" id="IPR011060">
    <property type="entry name" value="RibuloseP-bd_barrel"/>
</dbReference>
<dbReference type="NCBIfam" id="NF001373">
    <property type="entry name" value="PRK00278.1-6"/>
    <property type="match status" value="1"/>
</dbReference>
<dbReference type="NCBIfam" id="NF001377">
    <property type="entry name" value="PRK00278.2-4"/>
    <property type="match status" value="1"/>
</dbReference>
<dbReference type="PANTHER" id="PTHR22854:SF2">
    <property type="entry name" value="INDOLE-3-GLYCEROL-PHOSPHATE SYNTHASE"/>
    <property type="match status" value="1"/>
</dbReference>
<dbReference type="PANTHER" id="PTHR22854">
    <property type="entry name" value="TRYPTOPHAN BIOSYNTHESIS PROTEIN"/>
    <property type="match status" value="1"/>
</dbReference>
<dbReference type="Pfam" id="PF00218">
    <property type="entry name" value="IGPS"/>
    <property type="match status" value="1"/>
</dbReference>
<dbReference type="SUPFAM" id="SSF51366">
    <property type="entry name" value="Ribulose-phoshate binding barrel"/>
    <property type="match status" value="1"/>
</dbReference>
<dbReference type="PROSITE" id="PS00614">
    <property type="entry name" value="IGPS"/>
    <property type="match status" value="1"/>
</dbReference>
<accession>Q0BIM8</accession>
<protein>
    <recommendedName>
        <fullName evidence="1">Indole-3-glycerol phosphate synthase</fullName>
        <shortName evidence="1">IGPS</shortName>
        <ecNumber evidence="1">4.1.1.48</ecNumber>
    </recommendedName>
</protein>
<gene>
    <name evidence="1" type="primary">trpC</name>
    <name type="ordered locus">Bamb_0436</name>
</gene>
<comment type="catalytic activity">
    <reaction evidence="1">
        <text>1-(2-carboxyphenylamino)-1-deoxy-D-ribulose 5-phosphate + H(+) = (1S,2R)-1-C-(indol-3-yl)glycerol 3-phosphate + CO2 + H2O</text>
        <dbReference type="Rhea" id="RHEA:23476"/>
        <dbReference type="ChEBI" id="CHEBI:15377"/>
        <dbReference type="ChEBI" id="CHEBI:15378"/>
        <dbReference type="ChEBI" id="CHEBI:16526"/>
        <dbReference type="ChEBI" id="CHEBI:58613"/>
        <dbReference type="ChEBI" id="CHEBI:58866"/>
        <dbReference type="EC" id="4.1.1.48"/>
    </reaction>
</comment>
<comment type="pathway">
    <text evidence="1">Amino-acid biosynthesis; L-tryptophan biosynthesis; L-tryptophan from chorismate: step 4/5.</text>
</comment>
<comment type="similarity">
    <text evidence="1">Belongs to the TrpC family.</text>
</comment>
<reference key="1">
    <citation type="submission" date="2006-08" db="EMBL/GenBank/DDBJ databases">
        <title>Complete sequence of chromosome 1 of Burkholderia cepacia AMMD.</title>
        <authorList>
            <person name="Copeland A."/>
            <person name="Lucas S."/>
            <person name="Lapidus A."/>
            <person name="Barry K."/>
            <person name="Detter J.C."/>
            <person name="Glavina del Rio T."/>
            <person name="Hammon N."/>
            <person name="Israni S."/>
            <person name="Pitluck S."/>
            <person name="Bruce D."/>
            <person name="Chain P."/>
            <person name="Malfatti S."/>
            <person name="Shin M."/>
            <person name="Vergez L."/>
            <person name="Schmutz J."/>
            <person name="Larimer F."/>
            <person name="Land M."/>
            <person name="Hauser L."/>
            <person name="Kyrpides N."/>
            <person name="Kim E."/>
            <person name="Parke J."/>
            <person name="Coenye T."/>
            <person name="Konstantinidis K."/>
            <person name="Ramette A."/>
            <person name="Tiedje J."/>
            <person name="Richardson P."/>
        </authorList>
    </citation>
    <scope>NUCLEOTIDE SEQUENCE [LARGE SCALE GENOMIC DNA]</scope>
    <source>
        <strain>ATCC BAA-244 / DSM 16087 / CCUG 44356 / LMG 19182 / AMMD</strain>
    </source>
</reference>
<organism>
    <name type="scientific">Burkholderia ambifaria (strain ATCC BAA-244 / DSM 16087 / CCUG 44356 / LMG 19182 / AMMD)</name>
    <name type="common">Burkholderia cepacia (strain AMMD)</name>
    <dbReference type="NCBI Taxonomy" id="339670"/>
    <lineage>
        <taxon>Bacteria</taxon>
        <taxon>Pseudomonadati</taxon>
        <taxon>Pseudomonadota</taxon>
        <taxon>Betaproteobacteria</taxon>
        <taxon>Burkholderiales</taxon>
        <taxon>Burkholderiaceae</taxon>
        <taxon>Burkholderia</taxon>
        <taxon>Burkholderia cepacia complex</taxon>
    </lineage>
</organism>
<keyword id="KW-0028">Amino-acid biosynthesis</keyword>
<keyword id="KW-0057">Aromatic amino acid biosynthesis</keyword>
<keyword id="KW-0210">Decarboxylase</keyword>
<keyword id="KW-0456">Lyase</keyword>
<keyword id="KW-0822">Tryptophan biosynthesis</keyword>
<sequence>MSDILDRIIAVKREEIAAAMRSAPLEALKLEASARDLRDFVGALRAKQAAGHAAVIAEVKKASPSKGVLREHFVPADIARSYAAHGAACLSVLTDEQFFQGSVRYLEEARAACTLPVLRKDFIVDAYQILEARAMGADAILLIAAALDTPLMQDLEAYAHSLGLAVLVEVHDRDEMEQALTLKTPLLGINNRNLRTFETSIQTTLDMLDMIPPERIVVTESGILSRTDVDTMRAANVNAFLVGEAFMRADQPGEELARMFF</sequence>
<evidence type="ECO:0000255" key="1">
    <source>
        <dbReference type="HAMAP-Rule" id="MF_00134"/>
    </source>
</evidence>
<name>TRPC_BURCM</name>